<gene>
    <name type="primary">PFS2</name>
    <name type="ordered locus">YALI0A17424g</name>
</gene>
<feature type="chain" id="PRO_0000238506" description="Polyadenylation factor subunit 2">
    <location>
        <begin position="1"/>
        <end position="532"/>
    </location>
</feature>
<feature type="repeat" description="WD 1">
    <location>
        <begin position="143"/>
        <end position="182"/>
    </location>
</feature>
<feature type="repeat" description="WD 2">
    <location>
        <begin position="185"/>
        <end position="224"/>
    </location>
</feature>
<feature type="repeat" description="WD 3">
    <location>
        <begin position="227"/>
        <end position="266"/>
    </location>
</feature>
<feature type="repeat" description="WD 4">
    <location>
        <begin position="270"/>
        <end position="309"/>
    </location>
</feature>
<feature type="repeat" description="WD 5">
    <location>
        <begin position="312"/>
        <end position="353"/>
    </location>
</feature>
<feature type="repeat" description="WD 6">
    <location>
        <begin position="376"/>
        <end position="416"/>
    </location>
</feature>
<feature type="repeat" description="WD 7">
    <location>
        <begin position="432"/>
        <end position="471"/>
    </location>
</feature>
<feature type="region of interest" description="Disordered" evidence="2">
    <location>
        <begin position="50"/>
        <end position="72"/>
    </location>
</feature>
<feature type="region of interest" description="Disordered" evidence="2">
    <location>
        <begin position="513"/>
        <end position="532"/>
    </location>
</feature>
<feature type="compositionally biased region" description="Basic and acidic residues" evidence="2">
    <location>
        <begin position="61"/>
        <end position="72"/>
    </location>
</feature>
<sequence length="532" mass="58961">MSSDSGPLHRRTIPISVHIFSGFFYAPFYAPQLTQFIVTITMYSTYQRPAGYQPRQQPQGEEDRRPAHRRTVDHGSAFGKWHLDRLSGRTIQPANMRSEQSYIVDLLPPSAYTNINGSLRSTNPHITSVAATPAKFIQVALNKVRHPVYSATWTPDGRRLLTGSMSGEFTLWNGMTFNFESIMQAHESGVRSLKYSHSGEWLLSGDHEGNVKFWQPSLNCVNVIDKAHRESIRELAFAPSDHKFVTGSDDGLLKIWDFHESSNAESVLKGHGWDVKSVDWHSELGLIVSGSKDNLIKLWDPRSAKNVNTFHGFKNTVMKTTFQPTGTKRLLAAGCRDRTCRILDLRMLNSGSSEAGPTAGTDMPTRGDRSMAVLRGHDSDVFSLTWHPTHANVVTSGTKTGSIYTFNVDTTPAGGAYGPDSGILPVNTIPSAHDYCVSTLDYHPEGHVLCSGGLDRMTRFWARPRPGDPTSFRDKYYEPKEEGVSVKTLPGVNNATSRAGMARVEHVSTQHFNTAQPEVTDDEPVSIPGFAR</sequence>
<name>PFS2_YARLI</name>
<comment type="function">
    <text evidence="1">Required for 3'-end cleavage and polyadenylation of pre-mRNAs. Also involved in chromosome segregation where it has a role in chromosome attachment to the mitotic spindle (By similarity).</text>
</comment>
<comment type="subcellular location">
    <subcellularLocation>
        <location evidence="1">Nucleus</location>
    </subcellularLocation>
</comment>
<evidence type="ECO:0000250" key="1"/>
<evidence type="ECO:0000256" key="2">
    <source>
        <dbReference type="SAM" id="MobiDB-lite"/>
    </source>
</evidence>
<proteinExistence type="inferred from homology"/>
<reference key="1">
    <citation type="journal article" date="2004" name="Nature">
        <title>Genome evolution in yeasts.</title>
        <authorList>
            <person name="Dujon B."/>
            <person name="Sherman D."/>
            <person name="Fischer G."/>
            <person name="Durrens P."/>
            <person name="Casaregola S."/>
            <person name="Lafontaine I."/>
            <person name="de Montigny J."/>
            <person name="Marck C."/>
            <person name="Neuveglise C."/>
            <person name="Talla E."/>
            <person name="Goffard N."/>
            <person name="Frangeul L."/>
            <person name="Aigle M."/>
            <person name="Anthouard V."/>
            <person name="Babour A."/>
            <person name="Barbe V."/>
            <person name="Barnay S."/>
            <person name="Blanchin S."/>
            <person name="Beckerich J.-M."/>
            <person name="Beyne E."/>
            <person name="Bleykasten C."/>
            <person name="Boisrame A."/>
            <person name="Boyer J."/>
            <person name="Cattolico L."/>
            <person name="Confanioleri F."/>
            <person name="de Daruvar A."/>
            <person name="Despons L."/>
            <person name="Fabre E."/>
            <person name="Fairhead C."/>
            <person name="Ferry-Dumazet H."/>
            <person name="Groppi A."/>
            <person name="Hantraye F."/>
            <person name="Hennequin C."/>
            <person name="Jauniaux N."/>
            <person name="Joyet P."/>
            <person name="Kachouri R."/>
            <person name="Kerrest A."/>
            <person name="Koszul R."/>
            <person name="Lemaire M."/>
            <person name="Lesur I."/>
            <person name="Ma L."/>
            <person name="Muller H."/>
            <person name="Nicaud J.-M."/>
            <person name="Nikolski M."/>
            <person name="Oztas S."/>
            <person name="Ozier-Kalogeropoulos O."/>
            <person name="Pellenz S."/>
            <person name="Potier S."/>
            <person name="Richard G.-F."/>
            <person name="Straub M.-L."/>
            <person name="Suleau A."/>
            <person name="Swennen D."/>
            <person name="Tekaia F."/>
            <person name="Wesolowski-Louvel M."/>
            <person name="Westhof E."/>
            <person name="Wirth B."/>
            <person name="Zeniou-Meyer M."/>
            <person name="Zivanovic Y."/>
            <person name="Bolotin-Fukuhara M."/>
            <person name="Thierry A."/>
            <person name="Bouchier C."/>
            <person name="Caudron B."/>
            <person name="Scarpelli C."/>
            <person name="Gaillardin C."/>
            <person name="Weissenbach J."/>
            <person name="Wincker P."/>
            <person name="Souciet J.-L."/>
        </authorList>
    </citation>
    <scope>NUCLEOTIDE SEQUENCE [LARGE SCALE GENOMIC DNA]</scope>
    <source>
        <strain>CLIB 122 / E 150</strain>
    </source>
</reference>
<accession>Q6CGP9</accession>
<protein>
    <recommendedName>
        <fullName>Polyadenylation factor subunit 2</fullName>
    </recommendedName>
</protein>
<dbReference type="EMBL" id="CR382127">
    <property type="protein sequence ID" value="CAG84095.1"/>
    <property type="molecule type" value="Genomic_DNA"/>
</dbReference>
<dbReference type="RefSeq" id="XP_500163.1">
    <property type="nucleotide sequence ID" value="XM_500163.1"/>
</dbReference>
<dbReference type="SMR" id="Q6CGP9"/>
<dbReference type="FunCoup" id="Q6CGP9">
    <property type="interactions" value="232"/>
</dbReference>
<dbReference type="STRING" id="284591.Q6CGP9"/>
<dbReference type="EnsemblFungi" id="CAG84095">
    <property type="protein sequence ID" value="CAG84095"/>
    <property type="gene ID" value="YALI0_A17424g"/>
</dbReference>
<dbReference type="KEGG" id="yli:2905837"/>
<dbReference type="VEuPathDB" id="FungiDB:YALI0_A17424g"/>
<dbReference type="HOGENOM" id="CLU_000288_77_1_1"/>
<dbReference type="InParanoid" id="Q6CGP9"/>
<dbReference type="OMA" id="HHWDVKS"/>
<dbReference type="OrthoDB" id="1135at4891"/>
<dbReference type="Proteomes" id="UP000001300">
    <property type="component" value="Chromosome A"/>
</dbReference>
<dbReference type="GO" id="GO:0000785">
    <property type="term" value="C:chromatin"/>
    <property type="evidence" value="ECO:0007669"/>
    <property type="project" value="EnsemblFungi"/>
</dbReference>
<dbReference type="GO" id="GO:0005847">
    <property type="term" value="C:mRNA cleavage and polyadenylation specificity factor complex"/>
    <property type="evidence" value="ECO:0000318"/>
    <property type="project" value="GO_Central"/>
</dbReference>
<dbReference type="GO" id="GO:0007059">
    <property type="term" value="P:chromosome segregation"/>
    <property type="evidence" value="ECO:0007669"/>
    <property type="project" value="UniProtKB-KW"/>
</dbReference>
<dbReference type="GO" id="GO:0180010">
    <property type="term" value="P:co-transcriptional mRNA 3'-end processing, cleavage and polyadenylation pathway"/>
    <property type="evidence" value="ECO:0007669"/>
    <property type="project" value="EnsemblFungi"/>
</dbReference>
<dbReference type="CDD" id="cd00200">
    <property type="entry name" value="WD40"/>
    <property type="match status" value="1"/>
</dbReference>
<dbReference type="FunFam" id="2.130.10.10:FF:002409">
    <property type="entry name" value="Polyadenylation factor subunit 2"/>
    <property type="match status" value="1"/>
</dbReference>
<dbReference type="Gene3D" id="2.130.10.10">
    <property type="entry name" value="YVTN repeat-like/Quinoprotein amine dehydrogenase"/>
    <property type="match status" value="3"/>
</dbReference>
<dbReference type="InterPro" id="IPR020472">
    <property type="entry name" value="G-protein_beta_WD-40_rep"/>
</dbReference>
<dbReference type="InterPro" id="IPR045245">
    <property type="entry name" value="Pfs2-like"/>
</dbReference>
<dbReference type="InterPro" id="IPR015943">
    <property type="entry name" value="WD40/YVTN_repeat-like_dom_sf"/>
</dbReference>
<dbReference type="InterPro" id="IPR036322">
    <property type="entry name" value="WD40_repeat_dom_sf"/>
</dbReference>
<dbReference type="InterPro" id="IPR001680">
    <property type="entry name" value="WD40_rpt"/>
</dbReference>
<dbReference type="PANTHER" id="PTHR22836:SF0">
    <property type="entry name" value="PRE-MRNA 3' END PROCESSING PROTEIN WDR33"/>
    <property type="match status" value="1"/>
</dbReference>
<dbReference type="PANTHER" id="PTHR22836">
    <property type="entry name" value="WD40 REPEAT PROTEIN"/>
    <property type="match status" value="1"/>
</dbReference>
<dbReference type="Pfam" id="PF00400">
    <property type="entry name" value="WD40"/>
    <property type="match status" value="7"/>
</dbReference>
<dbReference type="PRINTS" id="PR00320">
    <property type="entry name" value="GPROTEINBRPT"/>
</dbReference>
<dbReference type="SMART" id="SM00320">
    <property type="entry name" value="WD40"/>
    <property type="match status" value="7"/>
</dbReference>
<dbReference type="SUPFAM" id="SSF50978">
    <property type="entry name" value="WD40 repeat-like"/>
    <property type="match status" value="1"/>
</dbReference>
<dbReference type="PROSITE" id="PS50082">
    <property type="entry name" value="WD_REPEATS_2"/>
    <property type="match status" value="5"/>
</dbReference>
<dbReference type="PROSITE" id="PS50294">
    <property type="entry name" value="WD_REPEATS_REGION"/>
    <property type="match status" value="1"/>
</dbReference>
<keyword id="KW-0159">Chromosome partition</keyword>
<keyword id="KW-0507">mRNA processing</keyword>
<keyword id="KW-0539">Nucleus</keyword>
<keyword id="KW-1185">Reference proteome</keyword>
<keyword id="KW-0677">Repeat</keyword>
<keyword id="KW-0853">WD repeat</keyword>
<organism>
    <name type="scientific">Yarrowia lipolytica (strain CLIB 122 / E 150)</name>
    <name type="common">Yeast</name>
    <name type="synonym">Candida lipolytica</name>
    <dbReference type="NCBI Taxonomy" id="284591"/>
    <lineage>
        <taxon>Eukaryota</taxon>
        <taxon>Fungi</taxon>
        <taxon>Dikarya</taxon>
        <taxon>Ascomycota</taxon>
        <taxon>Saccharomycotina</taxon>
        <taxon>Dipodascomycetes</taxon>
        <taxon>Dipodascales</taxon>
        <taxon>Dipodascales incertae sedis</taxon>
        <taxon>Yarrowia</taxon>
    </lineage>
</organism>